<sequence>MSVADIKKSEVVAQFARGANDTGSPEVQVALLTARITELTGHFKTHAKDHHSRRGLLRMVSRRRKLLDYLKGKDADRYRALIEKLGLRK</sequence>
<keyword id="KW-0687">Ribonucleoprotein</keyword>
<keyword id="KW-0689">Ribosomal protein</keyword>
<keyword id="KW-0694">RNA-binding</keyword>
<keyword id="KW-0699">rRNA-binding</keyword>
<proteinExistence type="inferred from homology"/>
<dbReference type="EMBL" id="CP000526">
    <property type="protein sequence ID" value="ABM49634.1"/>
    <property type="molecule type" value="Genomic_DNA"/>
</dbReference>
<dbReference type="RefSeq" id="WP_004185828.1">
    <property type="nucleotide sequence ID" value="NC_008785.1"/>
</dbReference>
<dbReference type="SMR" id="A1V2L1"/>
<dbReference type="GeneID" id="93059688"/>
<dbReference type="KEGG" id="bmv:BMASAVP1_A1124"/>
<dbReference type="HOGENOM" id="CLU_148518_0_0_4"/>
<dbReference type="GO" id="GO:0022627">
    <property type="term" value="C:cytosolic small ribosomal subunit"/>
    <property type="evidence" value="ECO:0007669"/>
    <property type="project" value="TreeGrafter"/>
</dbReference>
<dbReference type="GO" id="GO:0019843">
    <property type="term" value="F:rRNA binding"/>
    <property type="evidence" value="ECO:0007669"/>
    <property type="project" value="UniProtKB-UniRule"/>
</dbReference>
<dbReference type="GO" id="GO:0003735">
    <property type="term" value="F:structural constituent of ribosome"/>
    <property type="evidence" value="ECO:0007669"/>
    <property type="project" value="InterPro"/>
</dbReference>
<dbReference type="GO" id="GO:0006412">
    <property type="term" value="P:translation"/>
    <property type="evidence" value="ECO:0007669"/>
    <property type="project" value="UniProtKB-UniRule"/>
</dbReference>
<dbReference type="CDD" id="cd00353">
    <property type="entry name" value="Ribosomal_S15p_S13e"/>
    <property type="match status" value="1"/>
</dbReference>
<dbReference type="FunFam" id="1.10.287.10:FF:000002">
    <property type="entry name" value="30S ribosomal protein S15"/>
    <property type="match status" value="1"/>
</dbReference>
<dbReference type="Gene3D" id="6.10.250.3130">
    <property type="match status" value="1"/>
</dbReference>
<dbReference type="Gene3D" id="1.10.287.10">
    <property type="entry name" value="S15/NS1, RNA-binding"/>
    <property type="match status" value="1"/>
</dbReference>
<dbReference type="HAMAP" id="MF_01343_B">
    <property type="entry name" value="Ribosomal_uS15_B"/>
    <property type="match status" value="1"/>
</dbReference>
<dbReference type="InterPro" id="IPR000589">
    <property type="entry name" value="Ribosomal_uS15"/>
</dbReference>
<dbReference type="InterPro" id="IPR005290">
    <property type="entry name" value="Ribosomal_uS15_bac-type"/>
</dbReference>
<dbReference type="InterPro" id="IPR009068">
    <property type="entry name" value="uS15_NS1_RNA-bd_sf"/>
</dbReference>
<dbReference type="NCBIfam" id="TIGR00952">
    <property type="entry name" value="S15_bact"/>
    <property type="match status" value="1"/>
</dbReference>
<dbReference type="PANTHER" id="PTHR23321">
    <property type="entry name" value="RIBOSOMAL PROTEIN S15, BACTERIAL AND ORGANELLAR"/>
    <property type="match status" value="1"/>
</dbReference>
<dbReference type="PANTHER" id="PTHR23321:SF26">
    <property type="entry name" value="SMALL RIBOSOMAL SUBUNIT PROTEIN US15M"/>
    <property type="match status" value="1"/>
</dbReference>
<dbReference type="Pfam" id="PF00312">
    <property type="entry name" value="Ribosomal_S15"/>
    <property type="match status" value="1"/>
</dbReference>
<dbReference type="SMART" id="SM01387">
    <property type="entry name" value="Ribosomal_S15"/>
    <property type="match status" value="1"/>
</dbReference>
<dbReference type="SUPFAM" id="SSF47060">
    <property type="entry name" value="S15/NS1 RNA-binding domain"/>
    <property type="match status" value="1"/>
</dbReference>
<dbReference type="PROSITE" id="PS00362">
    <property type="entry name" value="RIBOSOMAL_S15"/>
    <property type="match status" value="1"/>
</dbReference>
<reference key="1">
    <citation type="journal article" date="2010" name="Genome Biol. Evol.">
        <title>Continuing evolution of Burkholderia mallei through genome reduction and large-scale rearrangements.</title>
        <authorList>
            <person name="Losada L."/>
            <person name="Ronning C.M."/>
            <person name="DeShazer D."/>
            <person name="Woods D."/>
            <person name="Fedorova N."/>
            <person name="Kim H.S."/>
            <person name="Shabalina S.A."/>
            <person name="Pearson T.R."/>
            <person name="Brinkac L."/>
            <person name="Tan P."/>
            <person name="Nandi T."/>
            <person name="Crabtree J."/>
            <person name="Badger J."/>
            <person name="Beckstrom-Sternberg S."/>
            <person name="Saqib M."/>
            <person name="Schutzer S.E."/>
            <person name="Keim P."/>
            <person name="Nierman W.C."/>
        </authorList>
    </citation>
    <scope>NUCLEOTIDE SEQUENCE [LARGE SCALE GENOMIC DNA]</scope>
    <source>
        <strain>SAVP1</strain>
    </source>
</reference>
<evidence type="ECO:0000255" key="1">
    <source>
        <dbReference type="HAMAP-Rule" id="MF_01343"/>
    </source>
</evidence>
<evidence type="ECO:0000305" key="2"/>
<name>RS15_BURMS</name>
<organism>
    <name type="scientific">Burkholderia mallei (strain SAVP1)</name>
    <dbReference type="NCBI Taxonomy" id="320388"/>
    <lineage>
        <taxon>Bacteria</taxon>
        <taxon>Pseudomonadati</taxon>
        <taxon>Pseudomonadota</taxon>
        <taxon>Betaproteobacteria</taxon>
        <taxon>Burkholderiales</taxon>
        <taxon>Burkholderiaceae</taxon>
        <taxon>Burkholderia</taxon>
        <taxon>pseudomallei group</taxon>
    </lineage>
</organism>
<feature type="chain" id="PRO_1000054762" description="Small ribosomal subunit protein uS15">
    <location>
        <begin position="1"/>
        <end position="89"/>
    </location>
</feature>
<accession>A1V2L1</accession>
<protein>
    <recommendedName>
        <fullName evidence="1">Small ribosomal subunit protein uS15</fullName>
    </recommendedName>
    <alternativeName>
        <fullName evidence="2">30S ribosomal protein S15</fullName>
    </alternativeName>
</protein>
<comment type="function">
    <text evidence="1">One of the primary rRNA binding proteins, it binds directly to 16S rRNA where it helps nucleate assembly of the platform of the 30S subunit by binding and bridging several RNA helices of the 16S rRNA.</text>
</comment>
<comment type="function">
    <text evidence="1">Forms an intersubunit bridge (bridge B4) with the 23S rRNA of the 50S subunit in the ribosome.</text>
</comment>
<comment type="subunit">
    <text evidence="1">Part of the 30S ribosomal subunit. Forms a bridge to the 50S subunit in the 70S ribosome, contacting the 23S rRNA.</text>
</comment>
<comment type="similarity">
    <text evidence="1">Belongs to the universal ribosomal protein uS15 family.</text>
</comment>
<gene>
    <name evidence="1" type="primary">rpsO</name>
    <name type="ordered locus">BMASAVP1_A1124</name>
</gene>